<name>MAGA9_HUMAN</name>
<accession>P43362</accession>
<accession>A8K8A7</accession>
<accession>Q7Z5K4</accession>
<accession>Q92910</accession>
<sequence length="315" mass="35088">MSLEQRSPHCKPDEDLEAQGEDLGLMGAQEPTGEEEETTSSSDSKEEEVSAAGSSSPPQSPQGGASSSISVYYTLWSQFDEGSSSQEEEEPSSSVDPAQLEFMFQEALKLKVAELVHFLLHKYRVKEPVTKAEMLESVIKNYKRYFPVIFGKASEFMQVIFGTDVKEVDPAGHSYILVTALGLSCDSMLGDGHSMPKAALLIIVLGVILTKDNCAPEEVIWEALSVMGVYVGKEHMFYGEPRKLLTQDWVQENYLEYRQVPGSDPAHYEFLWGSKAHAETSYEKVINYLVMLNAREPICYPSLYEEVLGEEQEGV</sequence>
<feature type="chain" id="PRO_0000156708" description="Melanoma-associated antigen 9">
    <location>
        <begin position="1"/>
        <end position="315"/>
    </location>
</feature>
<feature type="domain" description="MAGE" evidence="1">
    <location>
        <begin position="108"/>
        <end position="307"/>
    </location>
</feature>
<feature type="region of interest" description="Disordered" evidence="2">
    <location>
        <begin position="1"/>
        <end position="67"/>
    </location>
</feature>
<feature type="compositionally biased region" description="Basic and acidic residues" evidence="2">
    <location>
        <begin position="1"/>
        <end position="13"/>
    </location>
</feature>
<feature type="compositionally biased region" description="Low complexity" evidence="2">
    <location>
        <begin position="50"/>
        <end position="67"/>
    </location>
</feature>
<feature type="sequence variant" id="VAR_064160" description="In dbSNP:rs202146513." evidence="3">
    <original>P</original>
    <variation>H</variation>
    <location>
        <position position="31"/>
    </location>
</feature>
<feature type="sequence conflict" description="In Ref. 3; AAP82171." evidence="4" ref="3">
    <original>E</original>
    <variation>G</variation>
    <location>
        <position position="89"/>
    </location>
</feature>
<feature type="sequence conflict" description="In Ref. 3; AAP82171." evidence="4" ref="3">
    <original>G</original>
    <variation>R</variation>
    <location>
        <position position="309"/>
    </location>
</feature>
<feature type="sequence conflict" description="In Ref. 3; AAP82171." evidence="4" ref="3">
    <original>Q</original>
    <variation>E</variation>
    <location>
        <position position="312"/>
    </location>
</feature>
<keyword id="KW-1267">Proteomics identification</keyword>
<keyword id="KW-1185">Reference proteome</keyword>
<keyword id="KW-0825">Tumor antigen</keyword>
<gene>
    <name type="primary">MAGEA9</name>
    <name type="synonym">MAGE9</name>
    <name type="synonym">MAGEA9A</name>
</gene>
<gene>
    <name type="primary">MAGEA9B</name>
</gene>
<reference key="1">
    <citation type="journal article" date="1994" name="Immunogenetics">
        <title>Structure, chromosomal localization, and expression of 12 genes of the MAGE family.</title>
        <authorList>
            <person name="De Plaen E."/>
            <person name="Arden K."/>
            <person name="Traversari C."/>
            <person name="Gaforio J.J."/>
            <person name="Szikora J.-P."/>
            <person name="De Smet C."/>
            <person name="Brasseur F."/>
            <person name="van der Bruggen P."/>
            <person name="Lethe B.G."/>
            <person name="Lurquin C."/>
            <person name="Brasseur R."/>
            <person name="Chomez P."/>
            <person name="de Backer O."/>
            <person name="Cavenee W."/>
            <person name="Boon T."/>
        </authorList>
    </citation>
    <scope>NUCLEOTIDE SEQUENCE [GENOMIC DNA]</scope>
</reference>
<reference key="2">
    <citation type="journal article" date="1997" name="Hum. Mol. Genet.">
        <title>Molecular and phenotypic variation in patients with severe Hunter syndrome.</title>
        <authorList>
            <person name="Timms K.M."/>
            <person name="Bondeson M.-L."/>
            <person name="Ansari-Lari M.A."/>
            <person name="Lagerstedt K."/>
            <person name="Muzny D.M."/>
            <person name="Dugan-Rocha S.P."/>
            <person name="Nelson D.L."/>
            <person name="Pettersson U."/>
            <person name="Gibbs R.A."/>
        </authorList>
    </citation>
    <scope>NUCLEOTIDE SEQUENCE [GENOMIC DNA]</scope>
</reference>
<reference key="3">
    <citation type="submission" date="2003-05" db="EMBL/GenBank/DDBJ databases">
        <title>MAGE-9 antigen (MAGE9) gene expressed in human hepatocellular carcinoma patients.</title>
        <authorList>
            <person name="Zhu J."/>
            <person name="Feng Z."/>
            <person name="Guan X."/>
        </authorList>
    </citation>
    <scope>NUCLEOTIDE SEQUENCE [LARGE SCALE MRNA]</scope>
    <source>
        <tissue>Liver</tissue>
    </source>
</reference>
<reference key="4">
    <citation type="journal article" date="2004" name="Nat. Genet.">
        <title>Complete sequencing and characterization of 21,243 full-length human cDNAs.</title>
        <authorList>
            <person name="Ota T."/>
            <person name="Suzuki Y."/>
            <person name="Nishikawa T."/>
            <person name="Otsuki T."/>
            <person name="Sugiyama T."/>
            <person name="Irie R."/>
            <person name="Wakamatsu A."/>
            <person name="Hayashi K."/>
            <person name="Sato H."/>
            <person name="Nagai K."/>
            <person name="Kimura K."/>
            <person name="Makita H."/>
            <person name="Sekine M."/>
            <person name="Obayashi M."/>
            <person name="Nishi T."/>
            <person name="Shibahara T."/>
            <person name="Tanaka T."/>
            <person name="Ishii S."/>
            <person name="Yamamoto J."/>
            <person name="Saito K."/>
            <person name="Kawai Y."/>
            <person name="Isono Y."/>
            <person name="Nakamura Y."/>
            <person name="Nagahari K."/>
            <person name="Murakami K."/>
            <person name="Yasuda T."/>
            <person name="Iwayanagi T."/>
            <person name="Wagatsuma M."/>
            <person name="Shiratori A."/>
            <person name="Sudo H."/>
            <person name="Hosoiri T."/>
            <person name="Kaku Y."/>
            <person name="Kodaira H."/>
            <person name="Kondo H."/>
            <person name="Sugawara M."/>
            <person name="Takahashi M."/>
            <person name="Kanda K."/>
            <person name="Yokoi T."/>
            <person name="Furuya T."/>
            <person name="Kikkawa E."/>
            <person name="Omura Y."/>
            <person name="Abe K."/>
            <person name="Kamihara K."/>
            <person name="Katsuta N."/>
            <person name="Sato K."/>
            <person name="Tanikawa M."/>
            <person name="Yamazaki M."/>
            <person name="Ninomiya K."/>
            <person name="Ishibashi T."/>
            <person name="Yamashita H."/>
            <person name="Murakawa K."/>
            <person name="Fujimori K."/>
            <person name="Tanai H."/>
            <person name="Kimata M."/>
            <person name="Watanabe M."/>
            <person name="Hiraoka S."/>
            <person name="Chiba Y."/>
            <person name="Ishida S."/>
            <person name="Ono Y."/>
            <person name="Takiguchi S."/>
            <person name="Watanabe S."/>
            <person name="Yosida M."/>
            <person name="Hotuta T."/>
            <person name="Kusano J."/>
            <person name="Kanehori K."/>
            <person name="Takahashi-Fujii A."/>
            <person name="Hara H."/>
            <person name="Tanase T.-O."/>
            <person name="Nomura Y."/>
            <person name="Togiya S."/>
            <person name="Komai F."/>
            <person name="Hara R."/>
            <person name="Takeuchi K."/>
            <person name="Arita M."/>
            <person name="Imose N."/>
            <person name="Musashino K."/>
            <person name="Yuuki H."/>
            <person name="Oshima A."/>
            <person name="Sasaki N."/>
            <person name="Aotsuka S."/>
            <person name="Yoshikawa Y."/>
            <person name="Matsunawa H."/>
            <person name="Ichihara T."/>
            <person name="Shiohata N."/>
            <person name="Sano S."/>
            <person name="Moriya S."/>
            <person name="Momiyama H."/>
            <person name="Satoh N."/>
            <person name="Takami S."/>
            <person name="Terashima Y."/>
            <person name="Suzuki O."/>
            <person name="Nakagawa S."/>
            <person name="Senoh A."/>
            <person name="Mizoguchi H."/>
            <person name="Goto Y."/>
            <person name="Shimizu F."/>
            <person name="Wakebe H."/>
            <person name="Hishigaki H."/>
            <person name="Watanabe T."/>
            <person name="Sugiyama A."/>
            <person name="Takemoto M."/>
            <person name="Kawakami B."/>
            <person name="Yamazaki M."/>
            <person name="Watanabe K."/>
            <person name="Kumagai A."/>
            <person name="Itakura S."/>
            <person name="Fukuzumi Y."/>
            <person name="Fujimori Y."/>
            <person name="Komiyama M."/>
            <person name="Tashiro H."/>
            <person name="Tanigami A."/>
            <person name="Fujiwara T."/>
            <person name="Ono T."/>
            <person name="Yamada K."/>
            <person name="Fujii Y."/>
            <person name="Ozaki K."/>
            <person name="Hirao M."/>
            <person name="Ohmori Y."/>
            <person name="Kawabata A."/>
            <person name="Hikiji T."/>
            <person name="Kobatake N."/>
            <person name="Inagaki H."/>
            <person name="Ikema Y."/>
            <person name="Okamoto S."/>
            <person name="Okitani R."/>
            <person name="Kawakami T."/>
            <person name="Noguchi S."/>
            <person name="Itoh T."/>
            <person name="Shigeta K."/>
            <person name="Senba T."/>
            <person name="Matsumura K."/>
            <person name="Nakajima Y."/>
            <person name="Mizuno T."/>
            <person name="Morinaga M."/>
            <person name="Sasaki M."/>
            <person name="Togashi T."/>
            <person name="Oyama M."/>
            <person name="Hata H."/>
            <person name="Watanabe M."/>
            <person name="Komatsu T."/>
            <person name="Mizushima-Sugano J."/>
            <person name="Satoh T."/>
            <person name="Shirai Y."/>
            <person name="Takahashi Y."/>
            <person name="Nakagawa K."/>
            <person name="Okumura K."/>
            <person name="Nagase T."/>
            <person name="Nomura N."/>
            <person name="Kikuchi H."/>
            <person name="Masuho Y."/>
            <person name="Yamashita R."/>
            <person name="Nakai K."/>
            <person name="Yada T."/>
            <person name="Nakamura Y."/>
            <person name="Ohara O."/>
            <person name="Isogai T."/>
            <person name="Sugano S."/>
        </authorList>
    </citation>
    <scope>NUCLEOTIDE SEQUENCE [LARGE SCALE MRNA]</scope>
    <source>
        <tissue>Esophagus</tissue>
        <tissue>Testis</tissue>
    </source>
</reference>
<reference key="5">
    <citation type="submission" date="2005-07" db="EMBL/GenBank/DDBJ databases">
        <authorList>
            <person name="Mural R.J."/>
            <person name="Istrail S."/>
            <person name="Sutton G.G."/>
            <person name="Florea L."/>
            <person name="Halpern A.L."/>
            <person name="Mobarry C.M."/>
            <person name="Lippert R."/>
            <person name="Walenz B."/>
            <person name="Shatkay H."/>
            <person name="Dew I."/>
            <person name="Miller J.R."/>
            <person name="Flanigan M.J."/>
            <person name="Edwards N.J."/>
            <person name="Bolanos R."/>
            <person name="Fasulo D."/>
            <person name="Halldorsson B.V."/>
            <person name="Hannenhalli S."/>
            <person name="Turner R."/>
            <person name="Yooseph S."/>
            <person name="Lu F."/>
            <person name="Nusskern D.R."/>
            <person name="Shue B.C."/>
            <person name="Zheng X.H."/>
            <person name="Zhong F."/>
            <person name="Delcher A.L."/>
            <person name="Huson D.H."/>
            <person name="Kravitz S.A."/>
            <person name="Mouchard L."/>
            <person name="Reinert K."/>
            <person name="Remington K.A."/>
            <person name="Clark A.G."/>
            <person name="Waterman M.S."/>
            <person name="Eichler E.E."/>
            <person name="Adams M.D."/>
            <person name="Hunkapiller M.W."/>
            <person name="Myers E.W."/>
            <person name="Venter J.C."/>
        </authorList>
    </citation>
    <scope>NUCLEOTIDE SEQUENCE [LARGE SCALE GENOMIC DNA]</scope>
</reference>
<reference key="6">
    <citation type="journal article" date="2004" name="Genome Res.">
        <title>The status, quality, and expansion of the NIH full-length cDNA project: the Mammalian Gene Collection (MGC).</title>
        <authorList>
            <consortium name="The MGC Project Team"/>
        </authorList>
    </citation>
    <scope>NUCLEOTIDE SEQUENCE [LARGE SCALE MRNA]</scope>
    <source>
        <tissue>Lung</tissue>
    </source>
</reference>
<reference key="7">
    <citation type="journal article" date="2010" name="Am. J. Hum. Genet.">
        <title>Terminal osseous dysplasia is caused by a single recurrent mutation in the FLNA gene.</title>
        <authorList>
            <person name="Sun Y."/>
            <person name="Almomani R."/>
            <person name="Aten E."/>
            <person name="Celli J."/>
            <person name="van der Heijden J."/>
            <person name="Venselaar H."/>
            <person name="Robertson S.P."/>
            <person name="Baroncini A."/>
            <person name="Franco B."/>
            <person name="Basel-Vanagaite L."/>
            <person name="Horii E."/>
            <person name="Drut R."/>
            <person name="Ariyurek Y."/>
            <person name="den Dunnen J.T."/>
            <person name="Breuning M.H."/>
        </authorList>
    </citation>
    <scope>VARIANT HIS-31</scope>
</reference>
<evidence type="ECO:0000255" key="1">
    <source>
        <dbReference type="PROSITE-ProRule" id="PRU00127"/>
    </source>
</evidence>
<evidence type="ECO:0000256" key="2">
    <source>
        <dbReference type="SAM" id="MobiDB-lite"/>
    </source>
</evidence>
<evidence type="ECO:0000269" key="3">
    <source>
    </source>
</evidence>
<evidence type="ECO:0000305" key="4"/>
<proteinExistence type="evidence at protein level"/>
<protein>
    <recommendedName>
        <fullName>Melanoma-associated antigen 9</fullName>
    </recommendedName>
    <alternativeName>
        <fullName>Cancer/testis antigen 1.9</fullName>
        <shortName>CT1.9</shortName>
    </alternativeName>
    <alternativeName>
        <fullName>MAGE-9 antigen</fullName>
    </alternativeName>
</protein>
<organism>
    <name type="scientific">Homo sapiens</name>
    <name type="common">Human</name>
    <dbReference type="NCBI Taxonomy" id="9606"/>
    <lineage>
        <taxon>Eukaryota</taxon>
        <taxon>Metazoa</taxon>
        <taxon>Chordata</taxon>
        <taxon>Craniata</taxon>
        <taxon>Vertebrata</taxon>
        <taxon>Euteleostomi</taxon>
        <taxon>Mammalia</taxon>
        <taxon>Eutheria</taxon>
        <taxon>Euarchontoglires</taxon>
        <taxon>Primates</taxon>
        <taxon>Haplorrhini</taxon>
        <taxon>Catarrhini</taxon>
        <taxon>Hominidae</taxon>
        <taxon>Homo</taxon>
    </lineage>
</organism>
<dbReference type="EMBL" id="U10694">
    <property type="protein sequence ID" value="AAA68877.1"/>
    <property type="molecule type" value="Genomic_DNA"/>
</dbReference>
<dbReference type="EMBL" id="U66083">
    <property type="protein sequence ID" value="AAB67888.1"/>
    <property type="molecule type" value="Genomic_DNA"/>
</dbReference>
<dbReference type="EMBL" id="AY310325">
    <property type="protein sequence ID" value="AAP82171.1"/>
    <property type="molecule type" value="mRNA"/>
</dbReference>
<dbReference type="EMBL" id="AK292272">
    <property type="protein sequence ID" value="BAF84961.1"/>
    <property type="molecule type" value="mRNA"/>
</dbReference>
<dbReference type="EMBL" id="AK313321">
    <property type="protein sequence ID" value="BAG36126.1"/>
    <property type="molecule type" value="mRNA"/>
</dbReference>
<dbReference type="EMBL" id="CH471169">
    <property type="protein sequence ID" value="EAW99372.1"/>
    <property type="molecule type" value="Genomic_DNA"/>
</dbReference>
<dbReference type="EMBL" id="BC002351">
    <property type="protein sequence ID" value="AAH02351.1"/>
    <property type="molecule type" value="mRNA"/>
</dbReference>
<dbReference type="CCDS" id="CCDS14691.1"/>
<dbReference type="CCDS" id="CCDS35423.1"/>
<dbReference type="PIR" id="I38668">
    <property type="entry name" value="I38668"/>
</dbReference>
<dbReference type="RefSeq" id="NP_001074259.1">
    <property type="nucleotide sequence ID" value="NM_001080790.1"/>
</dbReference>
<dbReference type="RefSeq" id="NP_005356.1">
    <property type="nucleotide sequence ID" value="NM_005365.5"/>
</dbReference>
<dbReference type="RefSeq" id="XP_005262391.1">
    <property type="nucleotide sequence ID" value="XM_005262334.4"/>
</dbReference>
<dbReference type="RefSeq" id="XP_005262392.1">
    <property type="nucleotide sequence ID" value="XM_005262335.4"/>
</dbReference>
<dbReference type="RefSeq" id="XP_005278249.1">
    <property type="nucleotide sequence ID" value="XM_005278192.3"/>
</dbReference>
<dbReference type="RefSeq" id="XP_005278250.1">
    <property type="nucleotide sequence ID" value="XM_005278193.3"/>
</dbReference>
<dbReference type="RefSeq" id="XP_024308149.1">
    <property type="nucleotide sequence ID" value="XM_024452381.2"/>
</dbReference>
<dbReference type="RefSeq" id="XP_024308150.1">
    <property type="nucleotide sequence ID" value="XM_024452382.2"/>
</dbReference>
<dbReference type="RefSeq" id="XP_054183037.1">
    <property type="nucleotide sequence ID" value="XM_054327062.1"/>
</dbReference>
<dbReference type="RefSeq" id="XP_054183038.1">
    <property type="nucleotide sequence ID" value="XM_054327063.1"/>
</dbReference>
<dbReference type="SMR" id="P43362"/>
<dbReference type="BioGRID" id="110282">
    <property type="interactions" value="220"/>
</dbReference>
<dbReference type="BioGRID" id="608698">
    <property type="interactions" value="7"/>
</dbReference>
<dbReference type="FunCoup" id="P43362">
    <property type="interactions" value="86"/>
</dbReference>
<dbReference type="IntAct" id="P43362">
    <property type="interactions" value="212"/>
</dbReference>
<dbReference type="STRING" id="9606.ENSP00000243314"/>
<dbReference type="iPTMnet" id="P43362"/>
<dbReference type="PhosphoSitePlus" id="P43362"/>
<dbReference type="BioMuta" id="MAGEA9B"/>
<dbReference type="DMDM" id="1170862"/>
<dbReference type="jPOST" id="P43362"/>
<dbReference type="MassIVE" id="P43362"/>
<dbReference type="PaxDb" id="9606-ENSP00000243314"/>
<dbReference type="PeptideAtlas" id="P43362"/>
<dbReference type="ProteomicsDB" id="55624"/>
<dbReference type="Pumba" id="P43362"/>
<dbReference type="Antibodypedia" id="16920">
    <property type="antibodies" value="303 antibodies from 29 providers"/>
</dbReference>
<dbReference type="Antibodypedia" id="72928">
    <property type="antibodies" value="2 antibodies from 1 providers"/>
</dbReference>
<dbReference type="DNASU" id="4108"/>
<dbReference type="Ensembl" id="ENST00000243314.5">
    <property type="protein sequence ID" value="ENSP00000243314.5"/>
    <property type="gene ID" value="ENSG00000123584.7"/>
</dbReference>
<dbReference type="Ensembl" id="ENST00000595065.6">
    <property type="protein sequence ID" value="ENSP00000471017.1"/>
    <property type="gene ID" value="ENSG00000267978.6"/>
</dbReference>
<dbReference type="GeneID" id="4108"/>
<dbReference type="GeneID" id="728269"/>
<dbReference type="KEGG" id="hsa:4108"/>
<dbReference type="KEGG" id="hsa:728269"/>
<dbReference type="MANE-Select" id="ENST00000243314.5">
    <property type="protein sequence ID" value="ENSP00000243314.5"/>
    <property type="RefSeq nucleotide sequence ID" value="NM_005365.5"/>
    <property type="RefSeq protein sequence ID" value="NP_005356.1"/>
</dbReference>
<dbReference type="MANE-Select" id="ENST00000595065.6">
    <property type="protein sequence ID" value="ENSP00000471017.1"/>
    <property type="RefSeq nucleotide sequence ID" value="NM_001080790.1"/>
    <property type="RefSeq protein sequence ID" value="NP_001074259.1"/>
</dbReference>
<dbReference type="UCSC" id="uc004fdk.4">
    <property type="organism name" value="human"/>
</dbReference>
<dbReference type="AGR" id="HGNC:31909"/>
<dbReference type="AGR" id="HGNC:6807"/>
<dbReference type="CTD" id="4108"/>
<dbReference type="CTD" id="728269"/>
<dbReference type="DisGeNET" id="4108"/>
<dbReference type="DisGeNET" id="728269"/>
<dbReference type="GeneCards" id="MAGEA9"/>
<dbReference type="GeneCards" id="MAGEA9B"/>
<dbReference type="HGNC" id="HGNC:6807">
    <property type="gene designation" value="MAGEA9"/>
</dbReference>
<dbReference type="HGNC" id="HGNC:31909">
    <property type="gene designation" value="MAGEA9B"/>
</dbReference>
<dbReference type="HPA" id="ENSG00000123584">
    <property type="expression patterns" value="Tissue enriched (testis)"/>
</dbReference>
<dbReference type="HPA" id="ENSG00000267978">
    <property type="expression patterns" value="Tissue enriched (testis)"/>
</dbReference>
<dbReference type="MIM" id="300342">
    <property type="type" value="gene"/>
</dbReference>
<dbReference type="MIM" id="300764">
    <property type="type" value="gene"/>
</dbReference>
<dbReference type="neXtProt" id="NX_P43362"/>
<dbReference type="OpenTargets" id="ENSG00000123584"/>
<dbReference type="OpenTargets" id="ENSG00000267978"/>
<dbReference type="PharmGKB" id="PA145148473"/>
<dbReference type="VEuPathDB" id="HostDB:ENSG00000123584"/>
<dbReference type="VEuPathDB" id="HostDB:ENSG00000267978"/>
<dbReference type="eggNOG" id="KOG4562">
    <property type="taxonomic scope" value="Eukaryota"/>
</dbReference>
<dbReference type="GeneTree" id="ENSGT00940000165994"/>
<dbReference type="HOGENOM" id="CLU_039582_1_2_1"/>
<dbReference type="InParanoid" id="P43362"/>
<dbReference type="OMA" id="TCKSAFV"/>
<dbReference type="OrthoDB" id="9538249at2759"/>
<dbReference type="PAN-GO" id="P43362">
    <property type="GO annotations" value="3 GO annotations based on evolutionary models"/>
</dbReference>
<dbReference type="PhylomeDB" id="P43362"/>
<dbReference type="TreeFam" id="TF328505"/>
<dbReference type="PathwayCommons" id="P43362"/>
<dbReference type="SignaLink" id="P43362"/>
<dbReference type="BioGRID-ORCS" id="4108">
    <property type="hits" value="12 hits in 628 CRISPR screens"/>
</dbReference>
<dbReference type="BioGRID-ORCS" id="728269">
    <property type="hits" value="20 hits in 635 CRISPR screens"/>
</dbReference>
<dbReference type="ChiTaRS" id="MAGEA9B">
    <property type="organism name" value="human"/>
</dbReference>
<dbReference type="GeneWiki" id="MAGEA9"/>
<dbReference type="Pharos" id="P43362">
    <property type="development level" value="Tbio"/>
</dbReference>
<dbReference type="PRO" id="PR:P43362"/>
<dbReference type="Proteomes" id="UP000005640">
    <property type="component" value="Chromosome X"/>
</dbReference>
<dbReference type="RNAct" id="P43362">
    <property type="molecule type" value="protein"/>
</dbReference>
<dbReference type="Bgee" id="ENSG00000123584">
    <property type="expression patterns" value="Expressed in male germ line stem cell (sensu Vertebrata) in testis and 17 other cell types or tissues"/>
</dbReference>
<dbReference type="ExpressionAtlas" id="P43362">
    <property type="expression patterns" value="baseline and differential"/>
</dbReference>
<dbReference type="GO" id="GO:0005634">
    <property type="term" value="C:nucleus"/>
    <property type="evidence" value="ECO:0000318"/>
    <property type="project" value="GO_Central"/>
</dbReference>
<dbReference type="GO" id="GO:0042826">
    <property type="term" value="F:histone deacetylase binding"/>
    <property type="evidence" value="ECO:0000318"/>
    <property type="project" value="GO_Central"/>
</dbReference>
<dbReference type="GO" id="GO:0000122">
    <property type="term" value="P:negative regulation of transcription by RNA polymerase II"/>
    <property type="evidence" value="ECO:0000318"/>
    <property type="project" value="GO_Central"/>
</dbReference>
<dbReference type="FunFam" id="1.10.10.1200:FF:000002">
    <property type="entry name" value="MAGE family member A11"/>
    <property type="match status" value="1"/>
</dbReference>
<dbReference type="FunFam" id="1.10.10.1210:FF:000001">
    <property type="entry name" value="melanoma-associated antigen D1"/>
    <property type="match status" value="1"/>
</dbReference>
<dbReference type="Gene3D" id="1.10.10.1200">
    <property type="entry name" value="MAGE homology domain, winged helix WH1 motif"/>
    <property type="match status" value="1"/>
</dbReference>
<dbReference type="Gene3D" id="1.10.10.1210">
    <property type="entry name" value="MAGE homology domain, winged helix WH2 motif"/>
    <property type="match status" value="1"/>
</dbReference>
<dbReference type="InterPro" id="IPR037445">
    <property type="entry name" value="MAGE"/>
</dbReference>
<dbReference type="InterPro" id="IPR021072">
    <property type="entry name" value="MAGE_N"/>
</dbReference>
<dbReference type="InterPro" id="IPR041898">
    <property type="entry name" value="MAGE_WH1"/>
</dbReference>
<dbReference type="InterPro" id="IPR041899">
    <property type="entry name" value="MAGE_WH2"/>
</dbReference>
<dbReference type="InterPro" id="IPR002190">
    <property type="entry name" value="MHD_dom"/>
</dbReference>
<dbReference type="PANTHER" id="PTHR11736:SF62">
    <property type="entry name" value="MELANOMA-ASSOCIATED ANTIGEN 9"/>
    <property type="match status" value="1"/>
</dbReference>
<dbReference type="PANTHER" id="PTHR11736">
    <property type="entry name" value="MELANOMA-ASSOCIATED ANTIGEN MAGE ANTIGEN"/>
    <property type="match status" value="1"/>
</dbReference>
<dbReference type="Pfam" id="PF01454">
    <property type="entry name" value="MAGE"/>
    <property type="match status" value="1"/>
</dbReference>
<dbReference type="Pfam" id="PF12440">
    <property type="entry name" value="MAGE_N"/>
    <property type="match status" value="1"/>
</dbReference>
<dbReference type="SMART" id="SM01373">
    <property type="entry name" value="MAGE"/>
    <property type="match status" value="1"/>
</dbReference>
<dbReference type="SMART" id="SM01392">
    <property type="entry name" value="MAGE_N"/>
    <property type="match status" value="1"/>
</dbReference>
<dbReference type="PROSITE" id="PS50838">
    <property type="entry name" value="MAGE"/>
    <property type="match status" value="1"/>
</dbReference>
<comment type="function">
    <text>Not known, though may play a role in embryonal development and tumor transformation or aspects of tumor progression.</text>
</comment>
<comment type="interaction">
    <interactant intactId="EBI-10209139">
        <id>P43362</id>
    </interactant>
    <interactant intactId="EBI-741243">
        <id>Q9UKG1</id>
        <label>APPL1</label>
    </interactant>
    <organismsDiffer>false</organismsDiffer>
    <experiments>5</experiments>
</comment>
<comment type="tissue specificity">
    <text>Expressed in many tumors of several types, such as melanoma, head and neck squamous cell carcinoma, lung carcinoma and breast carcinoma, but not in normal tissues except for testes and placenta.</text>
</comment>